<dbReference type="EC" id="3.2.1.20"/>
<dbReference type="EMBL" id="M94674">
    <property type="protein sequence ID" value="AAA34350.2"/>
    <property type="molecule type" value="mRNA"/>
</dbReference>
<dbReference type="PIR" id="A45249">
    <property type="entry name" value="A45249"/>
</dbReference>
<dbReference type="SMR" id="Q02751"/>
<dbReference type="CAZy" id="GH13">
    <property type="family name" value="Glycoside Hydrolase Family 13"/>
</dbReference>
<dbReference type="VEuPathDB" id="FungiDB:CAWG_02336"/>
<dbReference type="VEuPathDB" id="FungiDB:CR_10790W_A"/>
<dbReference type="GO" id="GO:0004558">
    <property type="term" value="F:alpha-1,4-glucosidase activity"/>
    <property type="evidence" value="ECO:0007669"/>
    <property type="project" value="UniProtKB-EC"/>
</dbReference>
<dbReference type="GO" id="GO:0004556">
    <property type="term" value="F:alpha-amylase activity"/>
    <property type="evidence" value="ECO:0007669"/>
    <property type="project" value="TreeGrafter"/>
</dbReference>
<dbReference type="GO" id="GO:0033934">
    <property type="term" value="F:glucan 1,4-alpha-maltotriohydrolase activity"/>
    <property type="evidence" value="ECO:0007669"/>
    <property type="project" value="TreeGrafter"/>
</dbReference>
<dbReference type="GO" id="GO:0004574">
    <property type="term" value="F:oligo-1,6-glucosidase activity"/>
    <property type="evidence" value="ECO:0007669"/>
    <property type="project" value="TreeGrafter"/>
</dbReference>
<dbReference type="GO" id="GO:0004575">
    <property type="term" value="F:sucrose alpha-glucosidase activity"/>
    <property type="evidence" value="ECO:0007669"/>
    <property type="project" value="TreeGrafter"/>
</dbReference>
<dbReference type="GO" id="GO:0000025">
    <property type="term" value="P:maltose catabolic process"/>
    <property type="evidence" value="ECO:0007669"/>
    <property type="project" value="TreeGrafter"/>
</dbReference>
<dbReference type="GO" id="GO:0005987">
    <property type="term" value="P:sucrose catabolic process"/>
    <property type="evidence" value="ECO:0007669"/>
    <property type="project" value="TreeGrafter"/>
</dbReference>
<dbReference type="CDD" id="cd11333">
    <property type="entry name" value="AmyAc_SI_OligoGlu_DGase"/>
    <property type="match status" value="1"/>
</dbReference>
<dbReference type="FunFam" id="3.20.20.80:FF:000064">
    <property type="entry name" value="Oligo-1,6-glucosidase"/>
    <property type="match status" value="1"/>
</dbReference>
<dbReference type="FunFam" id="3.20.20.80:FF:000087">
    <property type="entry name" value="Oligo-1,6-glucosidase IMA1"/>
    <property type="match status" value="1"/>
</dbReference>
<dbReference type="FunFam" id="3.90.400.10:FF:000003">
    <property type="entry name" value="Probable alpha-glucosidase (Maltase)"/>
    <property type="match status" value="1"/>
</dbReference>
<dbReference type="Gene3D" id="3.20.20.80">
    <property type="entry name" value="Glycosidases"/>
    <property type="match status" value="1"/>
</dbReference>
<dbReference type="Gene3D" id="2.60.40.1180">
    <property type="entry name" value="Golgi alpha-mannosidase II"/>
    <property type="match status" value="1"/>
</dbReference>
<dbReference type="Gene3D" id="3.90.400.10">
    <property type="entry name" value="Oligo-1,6-glucosidase, Domain 2"/>
    <property type="match status" value="1"/>
</dbReference>
<dbReference type="InterPro" id="IPR006047">
    <property type="entry name" value="Glyco_hydro_13_cat_dom"/>
</dbReference>
<dbReference type="InterPro" id="IPR013780">
    <property type="entry name" value="Glyco_hydro_b"/>
</dbReference>
<dbReference type="InterPro" id="IPR017853">
    <property type="entry name" value="Glycoside_hydrolase_SF"/>
</dbReference>
<dbReference type="InterPro" id="IPR045857">
    <property type="entry name" value="O16G_dom_2"/>
</dbReference>
<dbReference type="PANTHER" id="PTHR10357">
    <property type="entry name" value="ALPHA-AMYLASE FAMILY MEMBER"/>
    <property type="match status" value="1"/>
</dbReference>
<dbReference type="PANTHER" id="PTHR10357:SF179">
    <property type="entry name" value="NEUTRAL AND BASIC AMINO ACID TRANSPORT PROTEIN RBAT"/>
    <property type="match status" value="1"/>
</dbReference>
<dbReference type="Pfam" id="PF00128">
    <property type="entry name" value="Alpha-amylase"/>
    <property type="match status" value="1"/>
</dbReference>
<dbReference type="SMART" id="SM00642">
    <property type="entry name" value="Aamy"/>
    <property type="match status" value="1"/>
</dbReference>
<dbReference type="SUPFAM" id="SSF51445">
    <property type="entry name" value="(Trans)glycosidases"/>
    <property type="match status" value="1"/>
</dbReference>
<dbReference type="SUPFAM" id="SSF51011">
    <property type="entry name" value="Glycosyl hydrolase domain"/>
    <property type="match status" value="1"/>
</dbReference>
<organism>
    <name type="scientific">Candida albicans</name>
    <name type="common">Yeast</name>
    <dbReference type="NCBI Taxonomy" id="5476"/>
    <lineage>
        <taxon>Eukaryota</taxon>
        <taxon>Fungi</taxon>
        <taxon>Dikarya</taxon>
        <taxon>Ascomycota</taxon>
        <taxon>Saccharomycotina</taxon>
        <taxon>Pichiomycetes</taxon>
        <taxon>Debaryomycetaceae</taxon>
        <taxon>Candida/Lodderomyces clade</taxon>
        <taxon>Candida</taxon>
    </lineage>
</organism>
<evidence type="ECO:0000250" key="1"/>
<evidence type="ECO:0000269" key="2">
    <source>
    </source>
</evidence>
<evidence type="ECO:0000305" key="3"/>
<accession>Q02751</accession>
<keyword id="KW-0903">Direct protein sequencing</keyword>
<keyword id="KW-0326">Glycosidase</keyword>
<keyword id="KW-0378">Hydrolase</keyword>
<keyword id="KW-0462">Maltose metabolism</keyword>
<reference key="1">
    <citation type="journal article" date="1992" name="J. Bacteriol.">
        <title>Cloning and characterization of a Candida albicans maltase gene involved in sucrose utilization.</title>
        <authorList>
            <person name="Geber A."/>
            <person name="Williamson P.R."/>
            <person name="Rex J.H."/>
            <person name="Sweeney E.C."/>
            <person name="Bennett J.E."/>
        </authorList>
    </citation>
    <scope>NUCLEOTIDE SEQUENCE [MRNA]</scope>
    <scope>PROTEIN SEQUENCE OF 2-27</scope>
    <source>
        <strain>ATCC 32354 / B311</strain>
    </source>
</reference>
<name>MALT_CANAX</name>
<sequence>MSEHKWWKEAVVYQIWPASYKDSNGDGVGDIPGIISTLDYIASLGVTTVWLSPMYDSPQDDMGYDVSDYENVYSKYGTLQDMDRLIAGCHDRGLKLILDLVINHTSVEHKWFKESRSSKDNPKRDWYIWKPPRIDSNGNKHPPNNWGSYFSGSAWKYDELTGEYYLHLFAESQPDLNWENKECREAIYNSAIKFWLDKGVDGFRIDTAGMYSKYQHFKDAPVAFPDTEFQPCEIYHKNGPRIHEFHKEMAKVMEPYDTMTVGEVGHSTREQALKYVSAAEKEMNMMFLFDVVELGSDPRDRFRYNGFDLVDLKKAIKSQGEFAEGTDAWSTVFIENHDQARAISRFGNDSPEFRVLSGKAIAMLQCCLTGTLFIYQGQEIGMTNVPRSWPIEEYKDINTINYYRAFKEKYGKDADYKQKEEKLVDVINRLARDNARTPVQWSHQQYAGFSEVEPWMRVNDNYKEINVEDQDGDDHSLLNFYRKLLKLRGEYKDLFVYGEMKFLDFDDKKLFTFAKEAPGSPVAYIVINFSGEDVKFEPLIKGNYKLVLTNVDKDSKDALSPYEARMYVVD</sequence>
<feature type="initiator methionine" description="Removed" evidence="2">
    <location>
        <position position="1"/>
    </location>
</feature>
<feature type="chain" id="PRO_0000054327" description="Alpha-glucosidase">
    <location>
        <begin position="2"/>
        <end position="570"/>
    </location>
</feature>
<feature type="active site" description="Nucleophile" evidence="1">
    <location>
        <position position="206"/>
    </location>
</feature>
<feature type="active site" description="Proton donor" evidence="1">
    <location>
        <position position="263"/>
    </location>
</feature>
<feature type="site" description="Transition state stabilizer" evidence="1">
    <location>
        <position position="338"/>
    </location>
</feature>
<comment type="catalytic activity">
    <reaction>
        <text>Hydrolysis of terminal, non-reducing (1-&gt;4)-linked alpha-D-glucose residues with release of alpha-D-glucose.</text>
        <dbReference type="EC" id="3.2.1.20"/>
    </reaction>
</comment>
<comment type="induction">
    <text>By maltose and sucrose. Repressed by glucose.</text>
</comment>
<comment type="similarity">
    <text evidence="3">Belongs to the glycosyl hydrolase 13 family.</text>
</comment>
<protein>
    <recommendedName>
        <fullName>Alpha-glucosidase</fullName>
        <ecNumber>3.2.1.20</ecNumber>
    </recommendedName>
    <alternativeName>
        <fullName>Maltase</fullName>
    </alternativeName>
</protein>
<proteinExistence type="evidence at protein level"/>
<gene>
    <name type="primary">MAL2</name>
    <name type="synonym">MAL1</name>
</gene>